<organism>
    <name type="scientific">Desulfotalea psychrophila (strain LSv54 / DSM 12343)</name>
    <dbReference type="NCBI Taxonomy" id="177439"/>
    <lineage>
        <taxon>Bacteria</taxon>
        <taxon>Pseudomonadati</taxon>
        <taxon>Thermodesulfobacteriota</taxon>
        <taxon>Desulfobulbia</taxon>
        <taxon>Desulfobulbales</taxon>
        <taxon>Desulfocapsaceae</taxon>
        <taxon>Desulfotalea</taxon>
    </lineage>
</organism>
<keyword id="KW-0002">3D-structure</keyword>
<keyword id="KW-0456">Lyase</keyword>
<keyword id="KW-0460">Magnesium</keyword>
<keyword id="KW-0474">Menaquinone biosynthesis</keyword>
<keyword id="KW-0479">Metal-binding</keyword>
<keyword id="KW-1185">Reference proteome</keyword>
<protein>
    <recommendedName>
        <fullName evidence="3">o-succinylbenzoate synthase</fullName>
        <shortName evidence="1">OSB synthase</shortName>
        <shortName evidence="3">OSBS</shortName>
        <ecNumber evidence="2">4.2.1.113</ecNumber>
    </recommendedName>
    <alternativeName>
        <fullName evidence="1">4-(2'-carboxyphenyl)-4-oxybutyric acid synthase</fullName>
    </alternativeName>
    <alternativeName>
        <fullName evidence="1">o-succinylbenzoic acid synthase</fullName>
    </alternativeName>
</protein>
<gene>
    <name evidence="1" type="primary">menC</name>
    <name evidence="5" type="ordered locus">DP0251</name>
</gene>
<evidence type="ECO:0000250" key="1">
    <source>
        <dbReference type="UniProtKB" id="P29208"/>
    </source>
</evidence>
<evidence type="ECO:0000269" key="2">
    <source>
    </source>
</evidence>
<evidence type="ECO:0000303" key="3">
    <source>
    </source>
</evidence>
<evidence type="ECO:0000305" key="4"/>
<evidence type="ECO:0000312" key="5">
    <source>
        <dbReference type="EMBL" id="CAG34980.1"/>
    </source>
</evidence>
<evidence type="ECO:0007744" key="6">
    <source>
        <dbReference type="PDB" id="2PGE"/>
    </source>
</evidence>
<evidence type="ECO:0007829" key="7">
    <source>
        <dbReference type="PDB" id="2PGE"/>
    </source>
</evidence>
<name>MENC_DESPS</name>
<sequence length="368" mass="40565">MSGMELSYRRSDLIFKRPAGTSRGVLTSKPTWFVRLDIDGHGGQGEVSLIPGLSLDPEEQIGRELDLLARRLRAEEPIRLRQFLAERGGADFSDYRSVLTDIAGILDSWQVSTDGRFPALRFALEMALLDLLSGGRQEWFASDFTRGEKRIPVNGLIWMGEAAFMQEQIEAKLAEGYGCLKLKIGAIDFDKECALLAGIRESFSPQQLEIRVDANGAFSPANAPQRLKRLSQFHLHSIEQPIRQHQWSEMAALCANSPLAIALDEELIGLGAEQRSAMLDAIRPQYIILKPSLLGGFHYAGQWIELARERGIGFWITSALESNLGLAAIAQWTALYQPTMPQGLGTGQLYTNNLPSNLAVDGGLLGVS</sequence>
<proteinExistence type="evidence at protein level"/>
<reference key="1">
    <citation type="journal article" date="2004" name="Environ. Microbiol.">
        <title>The genome of Desulfotalea psychrophila, a sulfate-reducing bacterium from permanently cold Arctic sediments.</title>
        <authorList>
            <person name="Rabus R."/>
            <person name="Ruepp A."/>
            <person name="Frickey T."/>
            <person name="Rattei T."/>
            <person name="Fartmann B."/>
            <person name="Stark M."/>
            <person name="Bauer M."/>
            <person name="Zibat A."/>
            <person name="Lombardot T."/>
            <person name="Becker I."/>
            <person name="Amann J."/>
            <person name="Gellner K."/>
            <person name="Teeling H."/>
            <person name="Leuschner W.D."/>
            <person name="Gloeckner F.-O."/>
            <person name="Lupas A.N."/>
            <person name="Amann R."/>
            <person name="Klenk H.-P."/>
        </authorList>
    </citation>
    <scope>NUCLEOTIDE SEQUENCE [LARGE SCALE GENOMIC DNA]</scope>
    <source>
        <strain>DSM 12343 / LSv54</strain>
    </source>
</reference>
<reference evidence="6" key="2">
    <citation type="journal article" date="2014" name="Proc. Natl. Acad. Sci. U.S.A.">
        <title>Loss of quaternary structure is associated with rapid sequence divergence in the OSBS family.</title>
        <authorList>
            <person name="Odokonyero D."/>
            <person name="Sakai A."/>
            <person name="Patskovsky Y."/>
            <person name="Malashkevich V.N."/>
            <person name="Fedorov A.A."/>
            <person name="Bonanno J.B."/>
            <person name="Fedorov E.V."/>
            <person name="Toro R."/>
            <person name="Agarwal R."/>
            <person name="Wang C."/>
            <person name="Ozerova N.D."/>
            <person name="Yew W.S."/>
            <person name="Sauder J.M."/>
            <person name="Swaminathan S."/>
            <person name="Burley S.K."/>
            <person name="Almo S.C."/>
            <person name="Glasner M.E."/>
        </authorList>
    </citation>
    <scope>X-RAY CRYSTALLOGRAPHY (1.60 ANGSTROMS) OF 2-368</scope>
    <scope>FUNCTION</scope>
    <scope>CATALYTIC ACTIVITY</scope>
    <scope>COFACTOR</scope>
    <scope>BIOPHYSICOCHEMICAL PROPERTIES</scope>
    <scope>SUBUNIT</scope>
</reference>
<feature type="chain" id="PRO_0000455093" description="o-succinylbenzoate synthase">
    <location>
        <begin position="1"/>
        <end position="368"/>
    </location>
</feature>
<feature type="active site" description="Proton donor" evidence="1">
    <location>
        <position position="183"/>
    </location>
</feature>
<feature type="active site" description="Proton acceptor" evidence="1">
    <location>
        <position position="290"/>
    </location>
</feature>
<feature type="binding site" evidence="1">
    <location>
        <position position="213"/>
    </location>
    <ligand>
        <name>Mg(2+)</name>
        <dbReference type="ChEBI" id="CHEBI:18420"/>
    </ligand>
</feature>
<feature type="binding site" evidence="1">
    <location>
        <position position="239"/>
    </location>
    <ligand>
        <name>Mg(2+)</name>
        <dbReference type="ChEBI" id="CHEBI:18420"/>
    </ligand>
</feature>
<feature type="binding site" evidence="1">
    <location>
        <position position="264"/>
    </location>
    <ligand>
        <name>Mg(2+)</name>
        <dbReference type="ChEBI" id="CHEBI:18420"/>
    </ligand>
</feature>
<feature type="strand" evidence="7">
    <location>
        <begin position="5"/>
        <end position="10"/>
    </location>
</feature>
<feature type="strand" evidence="7">
    <location>
        <begin position="13"/>
        <end position="15"/>
    </location>
</feature>
<feature type="strand" evidence="7">
    <location>
        <begin position="31"/>
        <end position="38"/>
    </location>
</feature>
<feature type="strand" evidence="7">
    <location>
        <begin position="41"/>
        <end position="48"/>
    </location>
</feature>
<feature type="turn" evidence="7">
    <location>
        <begin position="51"/>
        <end position="53"/>
    </location>
</feature>
<feature type="helix" evidence="7">
    <location>
        <begin position="58"/>
        <end position="60"/>
    </location>
</feature>
<feature type="helix" evidence="7">
    <location>
        <begin position="61"/>
        <end position="74"/>
    </location>
</feature>
<feature type="helix" evidence="7">
    <location>
        <begin position="78"/>
        <end position="86"/>
    </location>
</feature>
<feature type="helix" evidence="7">
    <location>
        <begin position="95"/>
        <end position="108"/>
    </location>
</feature>
<feature type="helix" evidence="7">
    <location>
        <begin position="118"/>
        <end position="133"/>
    </location>
</feature>
<feature type="strand" evidence="7">
    <location>
        <begin position="135"/>
        <end position="137"/>
    </location>
</feature>
<feature type="turn" evidence="7">
    <location>
        <begin position="143"/>
        <end position="147"/>
    </location>
</feature>
<feature type="strand" evidence="7">
    <location>
        <begin position="151"/>
        <end position="153"/>
    </location>
</feature>
<feature type="strand" evidence="7">
    <location>
        <begin position="155"/>
        <end position="157"/>
    </location>
</feature>
<feature type="helix" evidence="7">
    <location>
        <begin position="162"/>
        <end position="174"/>
    </location>
</feature>
<feature type="strand" evidence="7">
    <location>
        <begin position="178"/>
        <end position="183"/>
    </location>
</feature>
<feature type="helix" evidence="7">
    <location>
        <begin position="189"/>
        <end position="202"/>
    </location>
</feature>
<feature type="turn" evidence="7">
    <location>
        <begin position="205"/>
        <end position="207"/>
    </location>
</feature>
<feature type="strand" evidence="7">
    <location>
        <begin position="209"/>
        <end position="213"/>
    </location>
</feature>
<feature type="turn" evidence="7">
    <location>
        <begin position="220"/>
        <end position="222"/>
    </location>
</feature>
<feature type="helix" evidence="7">
    <location>
        <begin position="223"/>
        <end position="231"/>
    </location>
</feature>
<feature type="strand" evidence="7">
    <location>
        <begin position="236"/>
        <end position="239"/>
    </location>
</feature>
<feature type="helix" evidence="7">
    <location>
        <begin position="247"/>
        <end position="256"/>
    </location>
</feature>
<feature type="strand" evidence="7">
    <location>
        <begin position="261"/>
        <end position="264"/>
    </location>
</feature>
<feature type="helix" evidence="7">
    <location>
        <begin position="265"/>
        <end position="267"/>
    </location>
</feature>
<feature type="helix" evidence="7">
    <location>
        <begin position="273"/>
        <end position="282"/>
    </location>
</feature>
<feature type="strand" evidence="7">
    <location>
        <begin position="285"/>
        <end position="289"/>
    </location>
</feature>
<feature type="helix" evidence="7">
    <location>
        <begin position="291"/>
        <end position="294"/>
    </location>
</feature>
<feature type="helix" evidence="7">
    <location>
        <begin position="297"/>
        <end position="309"/>
    </location>
</feature>
<feature type="strand" evidence="7">
    <location>
        <begin position="313"/>
        <end position="317"/>
    </location>
</feature>
<feature type="helix" evidence="7">
    <location>
        <begin position="323"/>
        <end position="334"/>
    </location>
</feature>
<feature type="strand" evidence="7">
    <location>
        <begin position="350"/>
        <end position="352"/>
    </location>
</feature>
<feature type="strand" evidence="7">
    <location>
        <begin position="362"/>
        <end position="366"/>
    </location>
</feature>
<accession>Q6ARP5</accession>
<comment type="function">
    <text evidence="2">Converts 2-succinyl-6-hydroxy-2,4-cyclohexadiene-1-carboxylate (SHCHC) to 2-succinylbenzoate (OSB) (PubMed:24872444). Does not show N-succinylamino acid racemase (NSAR) activity with N-succinyl-L-phenylglycine as substrate (PubMed:24872444).</text>
</comment>
<comment type="catalytic activity">
    <reaction evidence="2">
        <text>(1R,6R)-6-hydroxy-2-succinyl-cyclohexa-2,4-diene-1-carboxylate = 2-succinylbenzoate + H2O</text>
        <dbReference type="Rhea" id="RHEA:10196"/>
        <dbReference type="ChEBI" id="CHEBI:15377"/>
        <dbReference type="ChEBI" id="CHEBI:18325"/>
        <dbReference type="ChEBI" id="CHEBI:58689"/>
        <dbReference type="EC" id="4.2.1.113"/>
    </reaction>
</comment>
<comment type="cofactor">
    <cofactor evidence="2">
        <name>a divalent metal cation</name>
        <dbReference type="ChEBI" id="CHEBI:60240"/>
    </cofactor>
</comment>
<comment type="biophysicochemical properties">
    <kinetics>
        <KM evidence="2">15 uM for SHCHC</KM>
        <text evidence="2">kcat is 17 sec(-1) with SHCHC as substrate.</text>
    </kinetics>
</comment>
<comment type="pathway">
    <text evidence="1">Quinol/quinone metabolism; 1,4-dihydroxy-2-naphthoate biosynthesis; 1,4-dihydroxy-2-naphthoate from chorismate: step 4/7.</text>
</comment>
<comment type="pathway">
    <text evidence="1">Cofactor biosynthesis; phylloquinone biosynthesis.</text>
</comment>
<comment type="subunit">
    <text evidence="2">Monomer.</text>
</comment>
<comment type="similarity">
    <text evidence="4">Belongs to the mandelate racemase/muconate lactonizing enzyme family. MenC type 1 subfamily.</text>
</comment>
<dbReference type="EC" id="4.2.1.113" evidence="2"/>
<dbReference type="EMBL" id="CR522870">
    <property type="protein sequence ID" value="CAG34980.1"/>
    <property type="molecule type" value="Genomic_DNA"/>
</dbReference>
<dbReference type="PDB" id="2PGE">
    <property type="method" value="X-ray"/>
    <property type="resolution" value="1.60 A"/>
    <property type="chains" value="A=2-368"/>
</dbReference>
<dbReference type="PDBsum" id="2PGE"/>
<dbReference type="SMR" id="Q6ARP5"/>
<dbReference type="STRING" id="177439.DP0251"/>
<dbReference type="DNASU" id="2946281"/>
<dbReference type="KEGG" id="dps:DP0251"/>
<dbReference type="eggNOG" id="COG4948">
    <property type="taxonomic scope" value="Bacteria"/>
</dbReference>
<dbReference type="HOGENOM" id="CLU_030273_0_0_7"/>
<dbReference type="UniPathway" id="UPA00995"/>
<dbReference type="UniPathway" id="UPA01057">
    <property type="reaction ID" value="UER00165"/>
</dbReference>
<dbReference type="EvolutionaryTrace" id="Q6ARP5"/>
<dbReference type="Proteomes" id="UP000000602">
    <property type="component" value="Chromosome"/>
</dbReference>
<dbReference type="GO" id="GO:0016829">
    <property type="term" value="F:lyase activity"/>
    <property type="evidence" value="ECO:0007669"/>
    <property type="project" value="UniProtKB-KW"/>
</dbReference>
<dbReference type="GO" id="GO:0046872">
    <property type="term" value="F:metal ion binding"/>
    <property type="evidence" value="ECO:0007669"/>
    <property type="project" value="UniProtKB-KW"/>
</dbReference>
<dbReference type="GO" id="GO:0009063">
    <property type="term" value="P:amino acid catabolic process"/>
    <property type="evidence" value="ECO:0007669"/>
    <property type="project" value="InterPro"/>
</dbReference>
<dbReference type="GO" id="GO:0009234">
    <property type="term" value="P:menaquinone biosynthetic process"/>
    <property type="evidence" value="ECO:0007669"/>
    <property type="project" value="UniProtKB-KW"/>
</dbReference>
<dbReference type="GO" id="GO:0042372">
    <property type="term" value="P:phylloquinone biosynthetic process"/>
    <property type="evidence" value="ECO:0007669"/>
    <property type="project" value="UniProtKB-UniPathway"/>
</dbReference>
<dbReference type="CDD" id="cd03320">
    <property type="entry name" value="OSBS"/>
    <property type="match status" value="1"/>
</dbReference>
<dbReference type="Gene3D" id="3.20.20.120">
    <property type="entry name" value="Enolase-like C-terminal domain"/>
    <property type="match status" value="1"/>
</dbReference>
<dbReference type="Gene3D" id="3.30.390.10">
    <property type="entry name" value="Enolase-like, N-terminal domain"/>
    <property type="match status" value="1"/>
</dbReference>
<dbReference type="InterPro" id="IPR036849">
    <property type="entry name" value="Enolase-like_C_sf"/>
</dbReference>
<dbReference type="InterPro" id="IPR029017">
    <property type="entry name" value="Enolase-like_N"/>
</dbReference>
<dbReference type="InterPro" id="IPR029065">
    <property type="entry name" value="Enolase_C-like"/>
</dbReference>
<dbReference type="InterPro" id="IPR018110">
    <property type="entry name" value="Mandel_Rmase/mucon_lact_enz_CS"/>
</dbReference>
<dbReference type="InterPro" id="IPR013342">
    <property type="entry name" value="Mandelate_racemase_C"/>
</dbReference>
<dbReference type="PANTHER" id="PTHR48073:SF2">
    <property type="entry name" value="O-SUCCINYLBENZOATE SYNTHASE"/>
    <property type="match status" value="1"/>
</dbReference>
<dbReference type="PANTHER" id="PTHR48073">
    <property type="entry name" value="O-SUCCINYLBENZOATE SYNTHASE-RELATED"/>
    <property type="match status" value="1"/>
</dbReference>
<dbReference type="Pfam" id="PF13378">
    <property type="entry name" value="MR_MLE_C"/>
    <property type="match status" value="1"/>
</dbReference>
<dbReference type="SFLD" id="SFLDS00001">
    <property type="entry name" value="Enolase"/>
    <property type="match status" value="1"/>
</dbReference>
<dbReference type="SFLD" id="SFLDF00009">
    <property type="entry name" value="o-succinylbenzoate_synthase"/>
    <property type="match status" value="1"/>
</dbReference>
<dbReference type="SMART" id="SM00922">
    <property type="entry name" value="MR_MLE"/>
    <property type="match status" value="1"/>
</dbReference>
<dbReference type="SUPFAM" id="SSF51604">
    <property type="entry name" value="Enolase C-terminal domain-like"/>
    <property type="match status" value="1"/>
</dbReference>
<dbReference type="SUPFAM" id="SSF54826">
    <property type="entry name" value="Enolase N-terminal domain-like"/>
    <property type="match status" value="1"/>
</dbReference>
<dbReference type="PROSITE" id="PS00909">
    <property type="entry name" value="MR_MLE_2"/>
    <property type="match status" value="1"/>
</dbReference>